<organism>
    <name type="scientific">Salmonella typhimurium (strain LT2 / SGSC1412 / ATCC 700720)</name>
    <dbReference type="NCBI Taxonomy" id="99287"/>
    <lineage>
        <taxon>Bacteria</taxon>
        <taxon>Pseudomonadati</taxon>
        <taxon>Pseudomonadota</taxon>
        <taxon>Gammaproteobacteria</taxon>
        <taxon>Enterobacterales</taxon>
        <taxon>Enterobacteriaceae</taxon>
        <taxon>Salmonella</taxon>
    </lineage>
</organism>
<feature type="signal peptide" evidence="1">
    <location>
        <begin position="1"/>
        <end position="34"/>
    </location>
</feature>
<feature type="chain" id="PRO_0000012047" description="Periplasmic trehalase">
    <location>
        <begin position="35"/>
        <end position="570"/>
    </location>
</feature>
<feature type="region of interest" description="Disordered" evidence="2">
    <location>
        <begin position="544"/>
        <end position="570"/>
    </location>
</feature>
<feature type="compositionally biased region" description="Low complexity" evidence="2">
    <location>
        <begin position="554"/>
        <end position="570"/>
    </location>
</feature>
<feature type="active site" description="Proton donor/acceptor" evidence="1">
    <location>
        <position position="319"/>
    </location>
</feature>
<feature type="active site" description="Proton donor/acceptor" evidence="1">
    <location>
        <position position="503"/>
    </location>
</feature>
<feature type="binding site" evidence="1">
    <location>
        <position position="159"/>
    </location>
    <ligand>
        <name>substrate</name>
    </ligand>
</feature>
<feature type="binding site" evidence="1">
    <location>
        <begin position="166"/>
        <end position="167"/>
    </location>
    <ligand>
        <name>substrate</name>
    </ligand>
</feature>
<feature type="binding site" evidence="1">
    <location>
        <position position="203"/>
    </location>
    <ligand>
        <name>substrate</name>
    </ligand>
</feature>
<feature type="binding site" evidence="1">
    <location>
        <begin position="212"/>
        <end position="214"/>
    </location>
    <ligand>
        <name>substrate</name>
    </ligand>
</feature>
<feature type="binding site" evidence="1">
    <location>
        <begin position="284"/>
        <end position="286"/>
    </location>
    <ligand>
        <name>substrate</name>
    </ligand>
</feature>
<feature type="binding site" evidence="1">
    <location>
        <position position="317"/>
    </location>
    <ligand>
        <name>substrate</name>
    </ligand>
</feature>
<feature type="binding site" evidence="1">
    <location>
        <position position="518"/>
    </location>
    <ligand>
        <name>substrate</name>
    </ligand>
</feature>
<name>TREA_SALTY</name>
<comment type="function">
    <text evidence="1">Provides the cells with the ability to utilize trehalose at high osmolarity by splitting it into glucose molecules that can subsequently be taken up by the phosphotransferase-mediated uptake system.</text>
</comment>
<comment type="catalytic activity">
    <reaction evidence="1">
        <text>alpha,alpha-trehalose + H2O = alpha-D-glucose + beta-D-glucose</text>
        <dbReference type="Rhea" id="RHEA:32675"/>
        <dbReference type="ChEBI" id="CHEBI:15377"/>
        <dbReference type="ChEBI" id="CHEBI:15903"/>
        <dbReference type="ChEBI" id="CHEBI:16551"/>
        <dbReference type="ChEBI" id="CHEBI:17925"/>
        <dbReference type="EC" id="3.2.1.28"/>
    </reaction>
</comment>
<comment type="subunit">
    <text evidence="1">Monomer.</text>
</comment>
<comment type="subcellular location">
    <subcellularLocation>
        <location evidence="1">Periplasm</location>
    </subcellularLocation>
</comment>
<comment type="similarity">
    <text evidence="1">Belongs to the glycosyl hydrolase 37 family.</text>
</comment>
<keyword id="KW-0326">Glycosidase</keyword>
<keyword id="KW-0378">Hydrolase</keyword>
<keyword id="KW-0574">Periplasm</keyword>
<keyword id="KW-1185">Reference proteome</keyword>
<keyword id="KW-0732">Signal</keyword>
<accession>Q8ZP20</accession>
<reference key="1">
    <citation type="journal article" date="2001" name="Nature">
        <title>Complete genome sequence of Salmonella enterica serovar Typhimurium LT2.</title>
        <authorList>
            <person name="McClelland M."/>
            <person name="Sanderson K.E."/>
            <person name="Spieth J."/>
            <person name="Clifton S.W."/>
            <person name="Latreille P."/>
            <person name="Courtney L."/>
            <person name="Porwollik S."/>
            <person name="Ali J."/>
            <person name="Dante M."/>
            <person name="Du F."/>
            <person name="Hou S."/>
            <person name="Layman D."/>
            <person name="Leonard S."/>
            <person name="Nguyen C."/>
            <person name="Scott K."/>
            <person name="Holmes A."/>
            <person name="Grewal N."/>
            <person name="Mulvaney E."/>
            <person name="Ryan E."/>
            <person name="Sun H."/>
            <person name="Florea L."/>
            <person name="Miller W."/>
            <person name="Stoneking T."/>
            <person name="Nhan M."/>
            <person name="Waterston R."/>
            <person name="Wilson R.K."/>
        </authorList>
    </citation>
    <scope>NUCLEOTIDE SEQUENCE [LARGE SCALE GENOMIC DNA]</scope>
    <source>
        <strain>LT2 / SGSC1412 / ATCC 700720</strain>
    </source>
</reference>
<evidence type="ECO:0000255" key="1">
    <source>
        <dbReference type="HAMAP-Rule" id="MF_01060"/>
    </source>
</evidence>
<evidence type="ECO:0000256" key="2">
    <source>
        <dbReference type="SAM" id="MobiDB-lite"/>
    </source>
</evidence>
<protein>
    <recommendedName>
        <fullName evidence="1">Periplasmic trehalase</fullName>
        <ecNumber evidence="1">3.2.1.28</ecNumber>
    </recommendedName>
    <alternativeName>
        <fullName evidence="1">Alpha,alpha-trehalase</fullName>
    </alternativeName>
    <alternativeName>
        <fullName evidence="1">Alpha,alpha-trehalose glucohydrolase</fullName>
    </alternativeName>
</protein>
<sequence length="570" mass="63509">MIPPEIRRSVLLQKAIKLALAGTLLTFASFSATAADPSSDTETPQPPDILLGPLFNDVQNAKLFPDQKTFADAIPNSDPLMILADYRMQRNQSGFDLRHFVDVNFTLPKAGEKYVPPAGQSLREHIDGLWPVLTRSTKNVEKWDSLLPLPESYVVPGGRFREIYYWDSYFTMLGLAESGHWDKVADMVANFGYEIDAWGHIPNGNRTYYLSRSQPPFFAFMVELLAQHEGDDALKEYLPQLQKEYAYWMEGVETLQPGQQNQRVVKLEDGSVLNRYWDDRDTPRPESWVEDIATAKSNPNRPATEIYRDLRSAAASGWDFSSRWMDNPQQLSTIRTTTIAPVDLNALLYQLEKTLARASAAAGDRAKASHYDALANARQKAIEMHLWNNKEGWYADYDLKNNKIRDQLTAAALFPLYVNAAAKDRAAKVAAAAQAHLLQPGGLATTSVKSGQQWDAPNGWAPLQWVAAEGLQNYGQDDVAMEVTWRFLTNVQHTYDREKKLVEKNDVSSTGTGGGGGEYPLQDGFGWTNGVTLKMLDLICPQEKPCDSVPSTRPASLSATPTKTPSAATQ</sequence>
<proteinExistence type="inferred from homology"/>
<dbReference type="EC" id="3.2.1.28" evidence="1"/>
<dbReference type="EMBL" id="AE006468">
    <property type="protein sequence ID" value="AAL20711.1"/>
    <property type="molecule type" value="Genomic_DNA"/>
</dbReference>
<dbReference type="RefSeq" id="NP_460752.1">
    <property type="nucleotide sequence ID" value="NC_003197.2"/>
</dbReference>
<dbReference type="RefSeq" id="WP_000612820.1">
    <property type="nucleotide sequence ID" value="NC_003197.2"/>
</dbReference>
<dbReference type="SMR" id="Q8ZP20"/>
<dbReference type="STRING" id="99287.STM1796"/>
<dbReference type="CAZy" id="GH37">
    <property type="family name" value="Glycoside Hydrolase Family 37"/>
</dbReference>
<dbReference type="PaxDb" id="99287-STM1796"/>
<dbReference type="GeneID" id="1253315"/>
<dbReference type="KEGG" id="stm:STM1796"/>
<dbReference type="PATRIC" id="fig|99287.12.peg.1895"/>
<dbReference type="HOGENOM" id="CLU_006451_3_1_6"/>
<dbReference type="PhylomeDB" id="Q8ZP20"/>
<dbReference type="BioCyc" id="SENT99287:STM1796-MONOMER"/>
<dbReference type="Proteomes" id="UP000001014">
    <property type="component" value="Chromosome"/>
</dbReference>
<dbReference type="GO" id="GO:0042597">
    <property type="term" value="C:periplasmic space"/>
    <property type="evidence" value="ECO:0007669"/>
    <property type="project" value="UniProtKB-SubCell"/>
</dbReference>
<dbReference type="GO" id="GO:0004555">
    <property type="term" value="F:alpha,alpha-trehalase activity"/>
    <property type="evidence" value="ECO:0000318"/>
    <property type="project" value="GO_Central"/>
</dbReference>
<dbReference type="GO" id="GO:0071474">
    <property type="term" value="P:cellular hyperosmotic response"/>
    <property type="evidence" value="ECO:0007669"/>
    <property type="project" value="InterPro"/>
</dbReference>
<dbReference type="GO" id="GO:0005993">
    <property type="term" value="P:trehalose catabolic process"/>
    <property type="evidence" value="ECO:0000318"/>
    <property type="project" value="GO_Central"/>
</dbReference>
<dbReference type="FunFam" id="1.50.10.10:FF:000003">
    <property type="entry name" value="Cytoplasmic trehalase"/>
    <property type="match status" value="1"/>
</dbReference>
<dbReference type="Gene3D" id="1.50.10.10">
    <property type="match status" value="1"/>
</dbReference>
<dbReference type="HAMAP" id="MF_01060">
    <property type="entry name" value="Peripl_trehalase"/>
    <property type="match status" value="1"/>
</dbReference>
<dbReference type="InterPro" id="IPR008928">
    <property type="entry name" value="6-hairpin_glycosidase_sf"/>
</dbReference>
<dbReference type="InterPro" id="IPR012341">
    <property type="entry name" value="6hp_glycosidase-like_sf"/>
</dbReference>
<dbReference type="InterPro" id="IPR001661">
    <property type="entry name" value="Glyco_hydro_37"/>
</dbReference>
<dbReference type="InterPro" id="IPR018232">
    <property type="entry name" value="Glyco_hydro_37_CS"/>
</dbReference>
<dbReference type="InterPro" id="IPR023720">
    <property type="entry name" value="Trehalase_periplasmic"/>
</dbReference>
<dbReference type="NCBIfam" id="NF009773">
    <property type="entry name" value="PRK13270.1"/>
    <property type="match status" value="1"/>
</dbReference>
<dbReference type="NCBIfam" id="NF009774">
    <property type="entry name" value="PRK13271.1"/>
    <property type="match status" value="1"/>
</dbReference>
<dbReference type="PANTHER" id="PTHR23403">
    <property type="entry name" value="TREHALASE"/>
    <property type="match status" value="1"/>
</dbReference>
<dbReference type="PANTHER" id="PTHR23403:SF1">
    <property type="entry name" value="TREHALASE"/>
    <property type="match status" value="1"/>
</dbReference>
<dbReference type="Pfam" id="PF01204">
    <property type="entry name" value="Trehalase"/>
    <property type="match status" value="1"/>
</dbReference>
<dbReference type="PRINTS" id="PR00744">
    <property type="entry name" value="GLHYDRLASE37"/>
</dbReference>
<dbReference type="SUPFAM" id="SSF48208">
    <property type="entry name" value="Six-hairpin glycosidases"/>
    <property type="match status" value="1"/>
</dbReference>
<dbReference type="PROSITE" id="PS00927">
    <property type="entry name" value="TREHALASE_1"/>
    <property type="match status" value="1"/>
</dbReference>
<dbReference type="PROSITE" id="PS00928">
    <property type="entry name" value="TREHALASE_2"/>
    <property type="match status" value="1"/>
</dbReference>
<gene>
    <name evidence="1" type="primary">treA</name>
    <name type="ordered locus">STM1796</name>
</gene>